<comment type="function">
    <text evidence="2">The physiological role of BioH is to remove the methyl group introduced by BioC when the pimeloyl moiety is complete. It allows to synthesize pimeloyl-ACP via the fatty acid synthetic pathway through the hydrolysis of the ester bonds of pimeloyl-ACP esters.</text>
</comment>
<comment type="catalytic activity">
    <reaction evidence="2">
        <text>6-carboxyhexanoyl-[ACP] methyl ester + H2O = 6-carboxyhexanoyl-[ACP] + methanol + H(+)</text>
        <dbReference type="Rhea" id="RHEA:42700"/>
        <dbReference type="Rhea" id="RHEA-COMP:9955"/>
        <dbReference type="Rhea" id="RHEA-COMP:10186"/>
        <dbReference type="ChEBI" id="CHEBI:15377"/>
        <dbReference type="ChEBI" id="CHEBI:15378"/>
        <dbReference type="ChEBI" id="CHEBI:17790"/>
        <dbReference type="ChEBI" id="CHEBI:78846"/>
        <dbReference type="ChEBI" id="CHEBI:82735"/>
        <dbReference type="EC" id="3.1.1.85"/>
    </reaction>
</comment>
<comment type="pathway">
    <text evidence="2">Cofactor biosynthesis; biotin biosynthesis.</text>
</comment>
<comment type="subunit">
    <text evidence="2">Monomer.</text>
</comment>
<comment type="subcellular location">
    <subcellularLocation>
        <location evidence="2">Cytoplasm</location>
    </subcellularLocation>
</comment>
<comment type="similarity">
    <text evidence="2">Belongs to the AB hydrolase superfamily. Carboxylesterase BioH family.</text>
</comment>
<comment type="sequence caution" evidence="3">
    <conflict type="erroneous initiation">
        <sequence resource="EMBL-CDS" id="CAD86210"/>
    </conflict>
</comment>
<proteinExistence type="inferred from homology"/>
<sequence length="252" mass="27952">MASIHIETTGNGPDLVMLHGWAMHSGVWDGVVESLSQRFRLHQVDLPGHGASRDCALDSLDQMTEVIADRLPGRYSVCGWSLGGQVAIRLALQAPERVQQLVLVASTPCFVRRADWPWGMEDSTLTLFMENLARDYTQTLNRFLTLQVSGSEDQARVLAWLRKSILRGQPPTPATLQAGLKILQTSDLRAELNQVSQPVLLIHGRNDVITPAGAADWMQQHLPRARLVLFPHCGHAPFLSFPEQFVSCFDAL</sequence>
<evidence type="ECO:0000255" key="1"/>
<evidence type="ECO:0000255" key="2">
    <source>
        <dbReference type="HAMAP-Rule" id="MF_01260"/>
    </source>
</evidence>
<evidence type="ECO:0000305" key="3"/>
<name>BIOH_NITEU</name>
<accession>Q82SL8</accession>
<protein>
    <recommendedName>
        <fullName evidence="2">Pimeloyl-[acyl-carrier protein] methyl ester esterase</fullName>
        <ecNumber evidence="2">3.1.1.85</ecNumber>
    </recommendedName>
    <alternativeName>
        <fullName evidence="2">Biotin synthesis protein BioH</fullName>
    </alternativeName>
    <alternativeName>
        <fullName evidence="2">Carboxylesterase BioH</fullName>
    </alternativeName>
</protein>
<keyword id="KW-0093">Biotin biosynthesis</keyword>
<keyword id="KW-0963">Cytoplasm</keyword>
<keyword id="KW-0378">Hydrolase</keyword>
<keyword id="KW-1185">Reference proteome</keyword>
<keyword id="KW-0719">Serine esterase</keyword>
<feature type="chain" id="PRO_0000204485" description="Pimeloyl-[acyl-carrier protein] methyl ester esterase">
    <location>
        <begin position="1"/>
        <end position="252"/>
    </location>
</feature>
<feature type="domain" description="AB hydrolase-1" evidence="1">
    <location>
        <begin position="15"/>
        <end position="239"/>
    </location>
</feature>
<feature type="active site" description="Nucleophile" evidence="2">
    <location>
        <position position="81"/>
    </location>
</feature>
<feature type="active site" evidence="2">
    <location>
        <position position="207"/>
    </location>
</feature>
<feature type="active site" evidence="2">
    <location>
        <position position="235"/>
    </location>
</feature>
<feature type="binding site" evidence="2">
    <location>
        <position position="21"/>
    </location>
    <ligand>
        <name>substrate</name>
    </ligand>
</feature>
<feature type="binding site" evidence="2">
    <location>
        <begin position="81"/>
        <end position="82"/>
    </location>
    <ligand>
        <name>substrate</name>
    </ligand>
</feature>
<feature type="binding site" evidence="2">
    <location>
        <begin position="143"/>
        <end position="147"/>
    </location>
    <ligand>
        <name>substrate</name>
    </ligand>
</feature>
<feature type="binding site" evidence="2">
    <location>
        <position position="235"/>
    </location>
    <ligand>
        <name>substrate</name>
    </ligand>
</feature>
<organism>
    <name type="scientific">Nitrosomonas europaea (strain ATCC 19718 / CIP 103999 / KCTC 2705 / NBRC 14298)</name>
    <dbReference type="NCBI Taxonomy" id="228410"/>
    <lineage>
        <taxon>Bacteria</taxon>
        <taxon>Pseudomonadati</taxon>
        <taxon>Pseudomonadota</taxon>
        <taxon>Betaproteobacteria</taxon>
        <taxon>Nitrosomonadales</taxon>
        <taxon>Nitrosomonadaceae</taxon>
        <taxon>Nitrosomonas</taxon>
    </lineage>
</organism>
<reference key="1">
    <citation type="journal article" date="2003" name="J. Bacteriol.">
        <title>Complete genome sequence of the ammonia-oxidizing bacterium and obligate chemolithoautotroph Nitrosomonas europaea.</title>
        <authorList>
            <person name="Chain P."/>
            <person name="Lamerdin J.E."/>
            <person name="Larimer F.W."/>
            <person name="Regala W."/>
            <person name="Lao V."/>
            <person name="Land M.L."/>
            <person name="Hauser L."/>
            <person name="Hooper A.B."/>
            <person name="Klotz M.G."/>
            <person name="Norton J."/>
            <person name="Sayavedra-Soto L.A."/>
            <person name="Arciero D.M."/>
            <person name="Hommes N.G."/>
            <person name="Whittaker M.M."/>
            <person name="Arp D.J."/>
        </authorList>
    </citation>
    <scope>NUCLEOTIDE SEQUENCE [LARGE SCALE GENOMIC DNA]</scope>
    <source>
        <strain>ATCC 19718 / CIP 103999 / KCTC 2705 / NBRC 14298</strain>
    </source>
</reference>
<dbReference type="EC" id="3.1.1.85" evidence="2"/>
<dbReference type="EMBL" id="AL954747">
    <property type="protein sequence ID" value="CAD86210.1"/>
    <property type="status" value="ALT_INIT"/>
    <property type="molecule type" value="Genomic_DNA"/>
</dbReference>
<dbReference type="RefSeq" id="WP_041356863.1">
    <property type="nucleotide sequence ID" value="NC_004757.1"/>
</dbReference>
<dbReference type="SMR" id="Q82SL8"/>
<dbReference type="STRING" id="228410.NE2298"/>
<dbReference type="ESTHER" id="niteu-BIOH">
    <property type="family name" value="BioH"/>
</dbReference>
<dbReference type="GeneID" id="87105429"/>
<dbReference type="KEGG" id="neu:NE2298"/>
<dbReference type="eggNOG" id="COG2267">
    <property type="taxonomic scope" value="Bacteria"/>
</dbReference>
<dbReference type="HOGENOM" id="CLU_020336_12_2_4"/>
<dbReference type="PhylomeDB" id="Q82SL8"/>
<dbReference type="UniPathway" id="UPA00078"/>
<dbReference type="Proteomes" id="UP000001416">
    <property type="component" value="Chromosome"/>
</dbReference>
<dbReference type="GO" id="GO:0005737">
    <property type="term" value="C:cytoplasm"/>
    <property type="evidence" value="ECO:0007669"/>
    <property type="project" value="UniProtKB-SubCell"/>
</dbReference>
<dbReference type="GO" id="GO:0016020">
    <property type="term" value="C:membrane"/>
    <property type="evidence" value="ECO:0007669"/>
    <property type="project" value="TreeGrafter"/>
</dbReference>
<dbReference type="GO" id="GO:0090499">
    <property type="term" value="F:pimelyl-[acyl-carrier protein] methyl ester esterase activity"/>
    <property type="evidence" value="ECO:0007669"/>
    <property type="project" value="UniProtKB-EC"/>
</dbReference>
<dbReference type="GO" id="GO:0009102">
    <property type="term" value="P:biotin biosynthetic process"/>
    <property type="evidence" value="ECO:0007669"/>
    <property type="project" value="UniProtKB-UniRule"/>
</dbReference>
<dbReference type="Gene3D" id="3.40.50.1820">
    <property type="entry name" value="alpha/beta hydrolase"/>
    <property type="match status" value="1"/>
</dbReference>
<dbReference type="HAMAP" id="MF_01260">
    <property type="entry name" value="Carboxylester"/>
    <property type="match status" value="1"/>
</dbReference>
<dbReference type="InterPro" id="IPR000073">
    <property type="entry name" value="AB_hydrolase_1"/>
</dbReference>
<dbReference type="InterPro" id="IPR029058">
    <property type="entry name" value="AB_hydrolase_fold"/>
</dbReference>
<dbReference type="InterPro" id="IPR050266">
    <property type="entry name" value="AB_hydrolase_sf"/>
</dbReference>
<dbReference type="InterPro" id="IPR010076">
    <property type="entry name" value="BioH"/>
</dbReference>
<dbReference type="NCBIfam" id="TIGR01738">
    <property type="entry name" value="bioH"/>
    <property type="match status" value="1"/>
</dbReference>
<dbReference type="PANTHER" id="PTHR43798:SF31">
    <property type="entry name" value="AB HYDROLASE SUPERFAMILY PROTEIN YCLE"/>
    <property type="match status" value="1"/>
</dbReference>
<dbReference type="PANTHER" id="PTHR43798">
    <property type="entry name" value="MONOACYLGLYCEROL LIPASE"/>
    <property type="match status" value="1"/>
</dbReference>
<dbReference type="Pfam" id="PF00561">
    <property type="entry name" value="Abhydrolase_1"/>
    <property type="match status" value="1"/>
</dbReference>
<dbReference type="SUPFAM" id="SSF53474">
    <property type="entry name" value="alpha/beta-Hydrolases"/>
    <property type="match status" value="1"/>
</dbReference>
<gene>
    <name evidence="2" type="primary">bioH</name>
    <name type="ordered locus">NE2298</name>
</gene>